<evidence type="ECO:0000255" key="1"/>
<evidence type="ECO:0000269" key="2">
    <source>
    </source>
</evidence>
<evidence type="ECO:0000303" key="3">
    <source>
    </source>
</evidence>
<evidence type="ECO:0000305" key="4"/>
<sequence>GASGLIPVMRN</sequence>
<dbReference type="GO" id="GO:0005576">
    <property type="term" value="C:extracellular region"/>
    <property type="evidence" value="ECO:0007669"/>
    <property type="project" value="UniProtKB-SubCell"/>
</dbReference>
<dbReference type="GO" id="GO:0007218">
    <property type="term" value="P:neuropeptide signaling pathway"/>
    <property type="evidence" value="ECO:0007669"/>
    <property type="project" value="UniProtKB-KW"/>
</dbReference>
<proteinExistence type="evidence at protein level"/>
<organism>
    <name type="scientific">Deropeltis atra</name>
    <name type="common">Cockroach</name>
    <dbReference type="NCBI Taxonomy" id="596120"/>
    <lineage>
        <taxon>Eukaryota</taxon>
        <taxon>Metazoa</taxon>
        <taxon>Ecdysozoa</taxon>
        <taxon>Arthropoda</taxon>
        <taxon>Hexapoda</taxon>
        <taxon>Insecta</taxon>
        <taxon>Pterygota</taxon>
        <taxon>Neoptera</taxon>
        <taxon>Polyneoptera</taxon>
        <taxon>Dictyoptera</taxon>
        <taxon>Blattodea</taxon>
        <taxon>Blattoidea</taxon>
        <taxon>Blattidae</taxon>
        <taxon>Blattinae</taxon>
        <taxon>Deropeltis</taxon>
    </lineage>
</organism>
<reference evidence="4" key="1">
    <citation type="journal article" date="2009" name="BMC Evol. Biol.">
        <title>A proteomic approach for studying insect phylogeny: CAPA peptides of ancient insect taxa (Dictyoptera, Blattoptera) as a test case.</title>
        <authorList>
            <person name="Roth S."/>
            <person name="Fromm B."/>
            <person name="Gaede G."/>
            <person name="Predel R."/>
        </authorList>
    </citation>
    <scope>PROTEIN SEQUENCE</scope>
    <scope>AMIDATION AT ASN-11</scope>
    <source>
        <tissue evidence="2">Abdominal perisympathetic organs</tissue>
    </source>
</reference>
<comment type="function">
    <text evidence="4">Mediates visceral muscle contractile activity (myotropic activity).</text>
</comment>
<comment type="subcellular location">
    <subcellularLocation>
        <location evidence="4">Secreted</location>
    </subcellularLocation>
</comment>
<comment type="similarity">
    <text evidence="1">Belongs to the periviscerokinin family.</text>
</comment>
<feature type="peptide" id="PRO_0000378733" description="Periviscerokinin-1" evidence="2">
    <location>
        <begin position="1"/>
        <end position="11"/>
    </location>
</feature>
<feature type="modified residue" description="Asparagine amide" evidence="2">
    <location>
        <position position="11"/>
    </location>
</feature>
<accession>P85593</accession>
<keyword id="KW-0027">Amidation</keyword>
<keyword id="KW-0903">Direct protein sequencing</keyword>
<keyword id="KW-0527">Neuropeptide</keyword>
<keyword id="KW-0964">Secreted</keyword>
<name>PVK1_DERAT</name>
<protein>
    <recommendedName>
        <fullName evidence="3">Periviscerokinin-1</fullName>
        <shortName evidence="3">DerAt-PVK-1</shortName>
    </recommendedName>
</protein>